<evidence type="ECO:0000250" key="1"/>
<evidence type="ECO:0000255" key="2">
    <source>
        <dbReference type="PROSITE-ProRule" id="PRU00527"/>
    </source>
</evidence>
<evidence type="ECO:0000269" key="3">
    <source>
    </source>
</evidence>
<evidence type="ECO:0000305" key="4"/>
<organism>
    <name type="scientific">Triticum aestivum</name>
    <name type="common">Wheat</name>
    <dbReference type="NCBI Taxonomy" id="4565"/>
    <lineage>
        <taxon>Eukaryota</taxon>
        <taxon>Viridiplantae</taxon>
        <taxon>Streptophyta</taxon>
        <taxon>Embryophyta</taxon>
        <taxon>Tracheophyta</taxon>
        <taxon>Spermatophyta</taxon>
        <taxon>Magnoliopsida</taxon>
        <taxon>Liliopsida</taxon>
        <taxon>Poales</taxon>
        <taxon>Poaceae</taxon>
        <taxon>BOP clade</taxon>
        <taxon>Pooideae</taxon>
        <taxon>Triticodae</taxon>
        <taxon>Triticeae</taxon>
        <taxon>Triticinae</taxon>
        <taxon>Triticum</taxon>
    </lineage>
</organism>
<sequence>MTMAARLMLVAALLCAAAAAATAQQATNVRATYHYYRPAQNNWDLGAPAVSAYCATWDASKPLSWRSKYGWTAFCGPAGAHGQAACGKCLRVTNPATGAQITARIVDQCANGGLDLDWDTVFTKIDTNGIGYQQGHLNVNYQFVDCRD</sequence>
<protein>
    <recommendedName>
        <fullName>Wheatwin-2</fullName>
    </recommendedName>
    <alternativeName>
        <fullName>Pathogenesis-related protein 4b</fullName>
    </alternativeName>
</protein>
<keyword id="KW-0929">Antimicrobial</keyword>
<keyword id="KW-0903">Direct protein sequencing</keyword>
<keyword id="KW-1015">Disulfide bond</keyword>
<keyword id="KW-0295">Fungicide</keyword>
<keyword id="KW-0381">Hypersensitive response</keyword>
<keyword id="KW-0568">Pathogenesis-related protein</keyword>
<keyword id="KW-0611">Plant defense</keyword>
<keyword id="KW-0873">Pyrrolidone carboxylic acid</keyword>
<keyword id="KW-1185">Reference proteome</keyword>
<keyword id="KW-0732">Signal</keyword>
<accession>O64393</accession>
<gene>
    <name type="primary">PR4B</name>
</gene>
<dbReference type="EMBL" id="AJ006099">
    <property type="protein sequence ID" value="CAA06857.1"/>
    <property type="molecule type" value="Genomic_DNA"/>
</dbReference>
<dbReference type="PIR" id="A53882">
    <property type="entry name" value="A53882"/>
</dbReference>
<dbReference type="PIR" id="T06486">
    <property type="entry name" value="T06486"/>
</dbReference>
<dbReference type="SMR" id="O64393"/>
<dbReference type="STRING" id="4565.O64393"/>
<dbReference type="PaxDb" id="4565-Traes_3B_F0BA991CF.1"/>
<dbReference type="EnsemblPlants" id="TraesARI3D03G02032980.1">
    <property type="protein sequence ID" value="TraesARI3D03G02032980.1.CDS1"/>
    <property type="gene ID" value="TraesARI3D03G02032980"/>
</dbReference>
<dbReference type="EnsemblPlants" id="TraesCAD_scaffold_092477_01G000100.1">
    <property type="protein sequence ID" value="TraesCAD_scaffold_092477_01G000100.1"/>
    <property type="gene ID" value="TraesCAD_scaffold_092477_01G000100"/>
</dbReference>
<dbReference type="EnsemblPlants" id="TraesCLE_scaffold_038497_01G000100.1">
    <property type="protein sequence ID" value="TraesCLE_scaffold_038497_01G000100.1"/>
    <property type="gene ID" value="TraesCLE_scaffold_038497_01G000100"/>
</dbReference>
<dbReference type="EnsemblPlants" id="TraesCS3D02G524700.1">
    <property type="protein sequence ID" value="TraesCS3D02G524700.1.cds1"/>
    <property type="gene ID" value="TraesCS3D02G524700"/>
</dbReference>
<dbReference type="EnsemblPlants" id="TraesCS3D03G1160600.1">
    <property type="protein sequence ID" value="TraesCS3D03G1160600.1.CDS1"/>
    <property type="gene ID" value="TraesCS3D03G1160600"/>
</dbReference>
<dbReference type="EnsemblPlants" id="TraesJAG3D03G02005310.1">
    <property type="protein sequence ID" value="TraesJAG3D03G02005310.1.CDS1"/>
    <property type="gene ID" value="TraesJAG3D03G02005310"/>
</dbReference>
<dbReference type="EnsemblPlants" id="TraesKAR3D01G0438480.1">
    <property type="protein sequence ID" value="cds.TraesKAR3D01G0438480.1"/>
    <property type="gene ID" value="TraesKAR3D01G0438480"/>
</dbReference>
<dbReference type="EnsemblPlants" id="TraesLDM3D03G01998580.1">
    <property type="protein sequence ID" value="TraesLDM3D03G01998580.1.CDS1"/>
    <property type="gene ID" value="TraesLDM3D03G01998580"/>
</dbReference>
<dbReference type="EnsemblPlants" id="TraesMAC3D03G01996890.1">
    <property type="protein sequence ID" value="TraesMAC3D03G01996890.1.CDS1"/>
    <property type="gene ID" value="TraesMAC3D03G01996890"/>
</dbReference>
<dbReference type="EnsemblPlants" id="TraesNOR3D03G02024780.1">
    <property type="protein sequence ID" value="TraesNOR3D03G02024780.1.CDS1"/>
    <property type="gene ID" value="TraesNOR3D03G02024780"/>
</dbReference>
<dbReference type="EnsemblPlants" id="TraesPARA_EIv1.0_1175530.1">
    <property type="protein sequence ID" value="TraesPARA_EIv1.0_1175530.1.CDS1"/>
    <property type="gene ID" value="TraesPARA_EIv1.0_1175530"/>
</dbReference>
<dbReference type="EnsemblPlants" id="TraesRN3D0101211800.1">
    <property type="protein sequence ID" value="TraesRN3D0101211800.1"/>
    <property type="gene ID" value="TraesRN3D0101211800"/>
</dbReference>
<dbReference type="EnsemblPlants" id="TraesROB_scaffold_012445_01G001200.1">
    <property type="protein sequence ID" value="TraesROB_scaffold_012445_01G001200.1"/>
    <property type="gene ID" value="TraesROB_scaffold_012445_01G001200"/>
</dbReference>
<dbReference type="EnsemblPlants" id="TraesSTA3D03G01993420.1">
    <property type="protein sequence ID" value="TraesSTA3D03G01993420.1.CDS1"/>
    <property type="gene ID" value="TraesSTA3D03G01993420"/>
</dbReference>
<dbReference type="EnsemblPlants" id="TraesSYM3D03G02023480.1">
    <property type="protein sequence ID" value="TraesSYM3D03G02023480.1.CDS1"/>
    <property type="gene ID" value="TraesSYM3D03G02023480"/>
</dbReference>
<dbReference type="EnsemblPlants" id="TraesWEE_scaffold_112963_01G000100.1">
    <property type="protein sequence ID" value="TraesWEE_scaffold_112963_01G000100.1"/>
    <property type="gene ID" value="TraesWEE_scaffold_112963_01G000100"/>
</dbReference>
<dbReference type="Gramene" id="TraesARI3D03G02032980.1">
    <property type="protein sequence ID" value="TraesARI3D03G02032980.1.CDS1"/>
    <property type="gene ID" value="TraesARI3D03G02032980"/>
</dbReference>
<dbReference type="Gramene" id="TraesCAD_scaffold_092477_01G000100.1">
    <property type="protein sequence ID" value="TraesCAD_scaffold_092477_01G000100.1"/>
    <property type="gene ID" value="TraesCAD_scaffold_092477_01G000100"/>
</dbReference>
<dbReference type="Gramene" id="TraesCLE_scaffold_038497_01G000100.1">
    <property type="protein sequence ID" value="TraesCLE_scaffold_038497_01G000100.1"/>
    <property type="gene ID" value="TraesCLE_scaffold_038497_01G000100"/>
</dbReference>
<dbReference type="Gramene" id="TraesCS3D02G524700.1">
    <property type="protein sequence ID" value="TraesCS3D02G524700.1.cds1"/>
    <property type="gene ID" value="TraesCS3D02G524700"/>
</dbReference>
<dbReference type="Gramene" id="TraesCS3D03G1160600.1">
    <property type="protein sequence ID" value="TraesCS3D03G1160600.1.CDS1"/>
    <property type="gene ID" value="TraesCS3D03G1160600"/>
</dbReference>
<dbReference type="Gramene" id="TraesJAG3D03G02005310.1">
    <property type="protein sequence ID" value="TraesJAG3D03G02005310.1.CDS1"/>
    <property type="gene ID" value="TraesJAG3D03G02005310"/>
</dbReference>
<dbReference type="Gramene" id="TraesKAR3D01G0438480.1">
    <property type="protein sequence ID" value="cds.TraesKAR3D01G0438480.1"/>
    <property type="gene ID" value="TraesKAR3D01G0438480"/>
</dbReference>
<dbReference type="Gramene" id="TraesLDM3D03G01998580.1">
    <property type="protein sequence ID" value="TraesLDM3D03G01998580.1.CDS1"/>
    <property type="gene ID" value="TraesLDM3D03G01998580"/>
</dbReference>
<dbReference type="Gramene" id="TraesMAC3D03G01996890.1">
    <property type="protein sequence ID" value="TraesMAC3D03G01996890.1.CDS1"/>
    <property type="gene ID" value="TraesMAC3D03G01996890"/>
</dbReference>
<dbReference type="Gramene" id="TraesNOR3D03G02024780.1">
    <property type="protein sequence ID" value="TraesNOR3D03G02024780.1.CDS1"/>
    <property type="gene ID" value="TraesNOR3D03G02024780"/>
</dbReference>
<dbReference type="Gramene" id="TraesPARA_EIv1.0_1175530.1">
    <property type="protein sequence ID" value="TraesPARA_EIv1.0_1175530.1.CDS1"/>
    <property type="gene ID" value="TraesPARA_EIv1.0_1175530"/>
</dbReference>
<dbReference type="Gramene" id="TraesRN3D0101211800.1">
    <property type="protein sequence ID" value="TraesRN3D0101211800.1"/>
    <property type="gene ID" value="TraesRN3D0101211800"/>
</dbReference>
<dbReference type="Gramene" id="TraesROB_scaffold_012445_01G001200.1">
    <property type="protein sequence ID" value="TraesROB_scaffold_012445_01G001200.1"/>
    <property type="gene ID" value="TraesROB_scaffold_012445_01G001200"/>
</dbReference>
<dbReference type="Gramene" id="TraesSTA3D03G01993420.1">
    <property type="protein sequence ID" value="TraesSTA3D03G01993420.1.CDS1"/>
    <property type="gene ID" value="TraesSTA3D03G01993420"/>
</dbReference>
<dbReference type="Gramene" id="TraesSYM3D03G02023480.1">
    <property type="protein sequence ID" value="TraesSYM3D03G02023480.1.CDS1"/>
    <property type="gene ID" value="TraesSYM3D03G02023480"/>
</dbReference>
<dbReference type="Gramene" id="TraesWEE_scaffold_112963_01G000100.1">
    <property type="protein sequence ID" value="TraesWEE_scaffold_112963_01G000100.1"/>
    <property type="gene ID" value="TraesWEE_scaffold_112963_01G000100"/>
</dbReference>
<dbReference type="eggNOG" id="KOG4742">
    <property type="taxonomic scope" value="Eukaryota"/>
</dbReference>
<dbReference type="OMA" id="ARATYHY"/>
<dbReference type="OrthoDB" id="5985073at2759"/>
<dbReference type="Proteomes" id="UP000019116">
    <property type="component" value="Chromosome 3D"/>
</dbReference>
<dbReference type="GO" id="GO:0004540">
    <property type="term" value="F:RNA nuclease activity"/>
    <property type="evidence" value="ECO:0007669"/>
    <property type="project" value="InterPro"/>
</dbReference>
<dbReference type="GO" id="GO:0042742">
    <property type="term" value="P:defense response to bacterium"/>
    <property type="evidence" value="ECO:0007669"/>
    <property type="project" value="InterPro"/>
</dbReference>
<dbReference type="GO" id="GO:0050832">
    <property type="term" value="P:defense response to fungus"/>
    <property type="evidence" value="ECO:0007669"/>
    <property type="project" value="UniProtKB-KW"/>
</dbReference>
<dbReference type="GO" id="GO:0031640">
    <property type="term" value="P:killing of cells of another organism"/>
    <property type="evidence" value="ECO:0007669"/>
    <property type="project" value="UniProtKB-KW"/>
</dbReference>
<dbReference type="GO" id="GO:0009626">
    <property type="term" value="P:plant-type hypersensitive response"/>
    <property type="evidence" value="ECO:0007669"/>
    <property type="project" value="UniProtKB-KW"/>
</dbReference>
<dbReference type="CDD" id="cd22777">
    <property type="entry name" value="DPBB_barwin-like"/>
    <property type="match status" value="1"/>
</dbReference>
<dbReference type="FunFam" id="2.40.40.10:FF:000007">
    <property type="entry name" value="Papaya barwin-like protein"/>
    <property type="match status" value="1"/>
</dbReference>
<dbReference type="Gene3D" id="2.40.40.10">
    <property type="entry name" value="RlpA-like domain"/>
    <property type="match status" value="1"/>
</dbReference>
<dbReference type="InterPro" id="IPR018226">
    <property type="entry name" value="Barwin_CS"/>
</dbReference>
<dbReference type="InterPro" id="IPR001153">
    <property type="entry name" value="Barwin_dom"/>
</dbReference>
<dbReference type="InterPro" id="IPR044301">
    <property type="entry name" value="PR4"/>
</dbReference>
<dbReference type="InterPro" id="IPR036908">
    <property type="entry name" value="RlpA-like_sf"/>
</dbReference>
<dbReference type="PANTHER" id="PTHR46351:SF18">
    <property type="entry name" value="WHEATWIN-2"/>
    <property type="match status" value="1"/>
</dbReference>
<dbReference type="PANTHER" id="PTHR46351">
    <property type="entry name" value="WOUND-INDUCED PROTEIN WIN2"/>
    <property type="match status" value="1"/>
</dbReference>
<dbReference type="Pfam" id="PF00967">
    <property type="entry name" value="Barwin"/>
    <property type="match status" value="1"/>
</dbReference>
<dbReference type="PRINTS" id="PR00602">
    <property type="entry name" value="BARWIN"/>
</dbReference>
<dbReference type="SUPFAM" id="SSF50685">
    <property type="entry name" value="Barwin-like endoglucanases"/>
    <property type="match status" value="1"/>
</dbReference>
<dbReference type="PROSITE" id="PS00771">
    <property type="entry name" value="BARWIN_1"/>
    <property type="match status" value="1"/>
</dbReference>
<dbReference type="PROSITE" id="PS00772">
    <property type="entry name" value="BARWIN_2"/>
    <property type="match status" value="1"/>
</dbReference>
<dbReference type="PROSITE" id="PS51174">
    <property type="entry name" value="BARWIN_3"/>
    <property type="match status" value="1"/>
</dbReference>
<feature type="signal peptide" evidence="3">
    <location>
        <begin position="1"/>
        <end position="23"/>
    </location>
</feature>
<feature type="chain" id="PRO_0000002794" description="Wheatwin-2">
    <location>
        <begin position="24"/>
        <end position="148"/>
    </location>
</feature>
<feature type="domain" description="Barwin" evidence="2">
    <location>
        <begin position="24"/>
        <end position="148"/>
    </location>
</feature>
<feature type="modified residue" description="Pyrrolidone carboxylic acid" evidence="3">
    <location>
        <position position="24"/>
    </location>
</feature>
<feature type="disulfide bond" evidence="1">
    <location>
        <begin position="54"/>
        <end position="86"/>
    </location>
</feature>
<feature type="disulfide bond" evidence="1">
    <location>
        <begin position="75"/>
        <end position="109"/>
    </location>
</feature>
<feature type="disulfide bond" evidence="1">
    <location>
        <begin position="89"/>
        <end position="146"/>
    </location>
</feature>
<feature type="sequence conflict" description="In Ref. 2; AA sequence." evidence="4" ref="2">
    <original>N</original>
    <variation>D</variation>
    <location>
        <position position="111"/>
    </location>
</feature>
<proteinExistence type="evidence at protein level"/>
<comment type="function">
    <text>Shows antifungal activity towards B.cinerea and towards the wheat-specific pathogenic fungi F.culmorum and F.graminearum (groups 1 and 2).</text>
</comment>
<comment type="subunit">
    <text>Monomer.</text>
</comment>
<name>WHW2_WHEAT</name>
<reference key="1">
    <citation type="journal article" date="1999" name="DNA Seq.">
        <title>Isolation and characterisation of wheat cDNA clones encoding PR4 proteins.</title>
        <authorList>
            <person name="Caruso C."/>
            <person name="Bertini L."/>
            <person name="Tucci M."/>
            <person name="Caporale C."/>
            <person name="Leonardi L."/>
            <person name="Saccardo F."/>
            <person name="Bressan R.A."/>
            <person name="Veronese P."/>
            <person name="Buonocore V."/>
        </authorList>
    </citation>
    <scope>NUCLEOTIDE SEQUENCE [GENOMIC DNA]</scope>
    <source>
        <strain>cv. San Pastore</strain>
        <tissue>Endosperm</tissue>
    </source>
</reference>
<reference key="2">
    <citation type="journal article" date="1996" name="J. Protein Chem.">
        <title>Structural and antifungal properties of a pathogenesis-related protein from wheat kernel.</title>
        <authorList>
            <person name="Caruso C."/>
            <person name="Caporale C."/>
            <person name="Chilosi G."/>
            <person name="Vacca F."/>
            <person name="Bertini L."/>
            <person name="Magro P."/>
            <person name="Poerio E."/>
            <person name="Buonocore V."/>
        </authorList>
    </citation>
    <scope>PROTEIN SEQUENCE OF 24-148</scope>
    <scope>PYROGLUTAMATE FORMATION AT GLN-24</scope>
    <scope>ANTIFUNGAL ACTIVITY</scope>
    <source>
        <strain>cv. San Pastore</strain>
        <tissue>Kernel</tissue>
    </source>
</reference>